<keyword id="KW-0067">ATP-binding</keyword>
<keyword id="KW-0131">Cell cycle</keyword>
<keyword id="KW-0132">Cell division</keyword>
<keyword id="KW-0158">Chromosome</keyword>
<keyword id="KW-0963">Cytoplasm</keyword>
<keyword id="KW-0206">Cytoskeleton</keyword>
<keyword id="KW-0238">DNA-binding</keyword>
<keyword id="KW-0413">Isomerase</keyword>
<keyword id="KW-0460">Magnesium</keyword>
<keyword id="KW-0469">Meiosis</keyword>
<keyword id="KW-0479">Metal-binding</keyword>
<keyword id="KW-0498">Mitosis</keyword>
<keyword id="KW-0547">Nucleotide-binding</keyword>
<keyword id="KW-0539">Nucleus</keyword>
<keyword id="KW-1185">Reference proteome</keyword>
<keyword id="KW-0799">Topoisomerase</keyword>
<organism>
    <name type="scientific">Caenorhabditis elegans</name>
    <dbReference type="NCBI Taxonomy" id="6239"/>
    <lineage>
        <taxon>Eukaryota</taxon>
        <taxon>Metazoa</taxon>
        <taxon>Ecdysozoa</taxon>
        <taxon>Nematoda</taxon>
        <taxon>Chromadorea</taxon>
        <taxon>Rhabditida</taxon>
        <taxon>Rhabditina</taxon>
        <taxon>Rhabditomorpha</taxon>
        <taxon>Rhabditoidea</taxon>
        <taxon>Rhabditidae</taxon>
        <taxon>Peloderinae</taxon>
        <taxon>Caenorhabditis</taxon>
    </lineage>
</organism>
<accession>Q23670</accession>
<accession>Q27509</accession>
<sequence length="1520" mass="172334">MSDSDSEFSIEDSPKKKTAPKKEKASPKKKKDDANESMVMTEEDRNVFTSIDKKGGGSKQMAIEDIYQKKSQLEHILLRPDTYIGSVEHTEKTPMWVYNMEESKLEQRDISYVPGLYKIYDEILVNAADNKQRDPKMNTIKITINKEKNEISVYNNGKGIPVTQHKVEKVYVPELIFGTLLTSSNYNDDEKKVTGGRNGYGAKLCNIFSTKFTLETSSRDYKSAFKQTWIKNMTRDEEPKIVKSTDEDFTKITFSPDLAKFKMKELDDDICHLMARRAYDVAGSSKGVAVFLNGKRIPIKGFEDYVQMYTSQFNNEGEPLKIAYEQVGDRWQVALALSEKGFQQVSFVNSIATTKGGRHVDYVADQMVAKFIDSIKRKLTKTSMNIKPFQIKNHMWVFVNCLIENPTFDSQTKETMTLQQKQFGSTCVLSEKFSKAASSVGITDAVMSWVRFKQMDDLNKKCSKTKTSKLKGIPKLEDANDAGTKNSQQCTLILTEGDSAKTLAVSGLSVVGRDKYGVFPLRGKLLNVREGNMKQIADNAEVNAMIKILGLQYKKKYETEDDFKTLRYGKLMVMADQDQDGSHIKGLVINFIHHFWPSLIQRNFVEEFITPIVKATKGKEEVSFYSLPEYSEWRMNTDNWKSYKIKYYKGLGTSTSKEAKEYFLDMVRHRIRFKYNGADDDNAVDMAFSKKKIEERKDWLSKWMREKKDRKQQGLAEEYLYNKDTRFVTFKDFVNRELVLFSNLDNERSIPCLVDGFKPGQRKVLFACFKRADKREVKVAQLAGAVAEISAYHHGEQSLMGTIVNLAQDYVGSNNINLLLPIGQFGTRLQGGKDSASARYIFTQLSPVTRTLFPAHDDNVLRFLYEENQRIEPEWYCPIIPMVLVNGAQGIGTGWSTNIPNYNPRELVKNIKRLIAGEPQKALAPWYKNFRGKIIQIDPSRFACYGEVAVLDDNTIEITELPIKQWTQDYKEKVLEGLMESSDKKSPVIVDYKEYHTDTTVKFVVKLSPGKLRELERGQDLHQVFKLQAVINTTCMVLFDAAGCLRTYTSPEAITQEFYDSRQEKYVQRKEYLLGVLQAQSKRLTNQARFILAKINNEIVLENKKKAAIVDVLIKMKFDADPVKKWKEEQKLKELRESGEIELDEDDLAAVAVEEDEAISSAAKAVETKLSDYDYLVGMALIKLSEEEKNKLIKESEEKMAEVRVIEKKTWQDLWHEDLDNFVSELDKQEAREKADQDASIKNAAKKLAADAKTGRGPKKNVCTEVLPSKDGQRIEPMLDAATKAKYEKMSQPKKERVKKEPKEPKEPKKVKKEGQDIKKFMSPAAPKTAKKEKSDGFNSDMSEESDVEFDEGIDFDSDDDGVEREDVVSKPKPRTGKGAAKAEVIDLSDDDEVPAKKPAPAKKAAPKKKKSEFSDLSGGDSDEEAEKKPSTSKKPSPKKAAPKTAEPKSKAVTDFFGASKKNGKKAAGSDDEDDESFVVAPREKSGRARKAPPTYDVDSGSDSDQPKKKRGRVVDSDSD</sequence>
<comment type="function">
    <text evidence="2 7 8 9 10 11">Control of topological states of DNA by transient breakage and subsequent rejoining of DNA strands. Topoisomerase II makes double-strand breaks (By similarity). Essential during mitosis in the adult germline and during embryogenesis for proper segregation of daughter chromosomes (PubMed:20116245, PubMed:23684975, PubMed:27707787). Required for centromere resolution during mitosis (PubMed:18202360). Required for chromosome segregation in anaphase of meiosis I during spermatogenesis (PubMed:27707787). Promotes cleavage furrow stability during cytokinesis upon the presence of chromatin obstructions (PubMed:23684975). Promotes DNA break formation upon zygotic genome activation in the Z2 and Z3 primordial germ cells in L1 larvae, thereby activating a checkpoint response (PubMed:26073019). Essential for embryogenesis (PubMed:18202360).</text>
</comment>
<comment type="catalytic activity">
    <reaction evidence="4">
        <text>ATP-dependent breakage, passage and rejoining of double-stranded DNA.</text>
        <dbReference type="EC" id="5.6.2.2"/>
    </reaction>
</comment>
<comment type="cofactor">
    <cofactor evidence="4">
        <name>Mg(2+)</name>
        <dbReference type="ChEBI" id="CHEBI:18420"/>
    </cofactor>
    <cofactor evidence="4">
        <name>Mn(2+)</name>
        <dbReference type="ChEBI" id="CHEBI:29035"/>
    </cofactor>
    <cofactor evidence="4">
        <name>Ca(2+)</name>
        <dbReference type="ChEBI" id="CHEBI:29108"/>
    </cofactor>
    <text evidence="4">Binds two Mg(2+) per subunit. The magnesium ions form salt bridges with both the protein and the DNA. Can also accept other divalent metal cations, such as Mn(2+) or Ca(2+).</text>
</comment>
<comment type="subunit">
    <text evidence="3 13 14">Homodimer (By similarity). Interacts with nmad-1; the interaction is required for localization of top-2 to DNA (PubMed:31283754). Interacts with gcna-1; this interaction allows the resolution of topoisomerase 2 DNA-protein cross-links (PubMed:31839538).</text>
</comment>
<comment type="subcellular location">
    <subcellularLocation>
        <location evidence="11">Nucleus</location>
        <location evidence="11">Nucleoplasm</location>
    </subcellularLocation>
    <subcellularLocation>
        <location evidence="11">Chromosome</location>
    </subcellularLocation>
    <subcellularLocation>
        <location evidence="11">Cytoplasm</location>
        <location evidence="11">Cytoskeleton</location>
        <location evidence="11">Spindle</location>
    </subcellularLocation>
    <text evidence="11 17">In the hermaphrodite and male germline, localizes to the nucleoplasm in the proliferative mitotic zone except in metaphase where it localizes to the spindle. In the transition zone, associates with chromosomes and localizes along the length of chromosomes in pachytene nuclei. In diplotene, starts to relocalize to the nucleoplasm. In the oocytes, it is completely disassociated from chromosomes in diakinetic nuclei. In the male germ line, it is mostly nucleoplasmic in karyosome nuclei. In male meiotic metaphase, surrounds chromosomes and a small pool is detected in the cytoplasm. In meiotic anaphase, encircles the chromosomes and localizes between the segregating chromosomes. May co-localize with nmad-1 on DNA (Probable).</text>
</comment>
<comment type="tissue specificity">
    <text evidence="11">Expressed in the hermaphrodite and male germline.</text>
</comment>
<comment type="disruption phenotype">
    <text evidence="7 8 9 10 11">RNAi-mediated knockdown results in embryonic lethality (PubMed:18202360). Disrupts proper hcp-3 localization on mitotic chromosomes indicating unresolved kinetochores and inhibits centromere resolution (PubMed:18202360). Causes a chromosome segregation defect during the first embryonic mitotic divisions without affecting cytokinesis (PubMed:20116245, PubMed:23684975, PubMed:27707787). Leads to increased localization of the condensin component capg-1 to the spindle midzone and the midbody and to chromatin bridges with enriched levels of capg-1 (PubMed:23684975). Increased levels of phosphorylated air-2 at the spindle midzone, indicating activation of the abscission checkpoint (PubMed:23684975). Leads to cleavage furrow regression and failed cytokinesis during the second embryonic division (PubMed:23684975). Results in lack of rad-51 foci formation which are indicative for DNA damage in Z2/Z3 primordial germ cells and leads to premature cell-cycle reentry of the Z2/Z3 cells in L1 stage larvae (PubMed:26073019).</text>
</comment>
<comment type="miscellaneous">
    <text>Eukaryotic topoisomerase I and II can relax both negative and positive supercoils, whereas prokaryotic enzymes relax only negative supercoils.</text>
</comment>
<comment type="similarity">
    <text evidence="16">Belongs to the type II topoisomerase family.</text>
</comment>
<protein>
    <recommendedName>
        <fullName evidence="16">DNA topoisomerase 2 top-2</fullName>
        <ecNumber evidence="4">5.6.2.2</ecNumber>
    </recommendedName>
    <alternativeName>
        <fullName>DNA topoisomerase II</fullName>
    </alternativeName>
</protein>
<reference key="1">
    <citation type="journal article" date="1998" name="Science">
        <title>Genome sequence of the nematode C. elegans: a platform for investigating biology.</title>
        <authorList>
            <consortium name="The C. elegans sequencing consortium"/>
        </authorList>
    </citation>
    <scope>NUCLEOTIDE SEQUENCE [LARGE SCALE GENOMIC DNA]</scope>
    <source>
        <strain>Bristol N2</strain>
    </source>
</reference>
<reference key="2">
    <citation type="journal article" date="2008" name="Genetics">
        <title>cin-4, a gene with homology to topoisomerase II, is required for centromere resolution by cohesin removal from sister kinetochores during mitosis.</title>
        <authorList>
            <person name="Stanvitch G."/>
            <person name="Moore L.L."/>
        </authorList>
    </citation>
    <scope>FUNCTION</scope>
    <scope>DISRUPTION PHENOTYPE</scope>
</reference>
<reference key="3">
    <citation type="journal article" date="2010" name="Curr. Biol.">
        <title>A role for separase in the regulation of RAB-11-positive vesicles at the cleavage furrow and midbody.</title>
        <authorList>
            <person name="Bembenek J.N."/>
            <person name="White J.G."/>
            <person name="Zheng Y."/>
        </authorList>
    </citation>
    <scope>FUNCTION</scope>
    <scope>DISRUPTION PHENOTYPE</scope>
</reference>
<reference key="4">
    <citation type="journal article" date="2013" name="Curr. Biol.">
        <title>Condensin and the spindle midzone prevent cytokinesis failure induced by chromatin bridges in C. elegans embryos.</title>
        <authorList>
            <person name="Bembenek J.N."/>
            <person name="Verbrugghe K.J."/>
            <person name="Khanikar J."/>
            <person name="Csankovszki G."/>
            <person name="Chan R.C."/>
        </authorList>
    </citation>
    <scope>FUNCTION</scope>
    <scope>DISRUPTION PHENOTYPE</scope>
</reference>
<reference key="5">
    <citation type="journal article" date="2015" name="Dev. Cell">
        <title>Zygotic genome activation triggers chromosome damage and checkpoint signaling in C. elegans primordial germ cells.</title>
        <authorList>
            <person name="Butuci M."/>
            <person name="Williams A.B."/>
            <person name="Wong M.M."/>
            <person name="Kramer B."/>
            <person name="Michael W.M."/>
        </authorList>
    </citation>
    <scope>FUNCTION</scope>
    <scope>DISRUPTION PHENOTYPE</scope>
</reference>
<reference key="6">
    <citation type="journal article" date="2016" name="Genetics">
        <title>The identification of a novel mutant allele of topoisomerase II in Caenorhabditis elegans reveals a unique role in chromosome segregation during spermatogenesis.</title>
        <authorList>
            <person name="Jaramillo-Lambert A."/>
            <person name="Fabritius A.S."/>
            <person name="Hansen T.J."/>
            <person name="Smith H.E."/>
            <person name="Golden A."/>
        </authorList>
    </citation>
    <scope>FUNCTION</scope>
    <scope>SUBCELLULAR LOCATION</scope>
    <scope>TISSUE SPECIFICITY</scope>
    <scope>DISRUPTION PHENOTYPE</scope>
    <scope>MUTAGENESIS OF ARG-828</scope>
</reference>
<reference key="7">
    <citation type="journal article" date="2017" name="PLoS Genet.">
        <title>Natural variation in a single amino acid substitution underlies physiological responses to topoisomerase II poisons.</title>
        <authorList>
            <person name="Zdraljevic S."/>
            <person name="Strand C."/>
            <person name="Seidel H.S."/>
            <person name="Cook D.E."/>
            <person name="Doench J.G."/>
            <person name="Andersen E.C."/>
        </authorList>
    </citation>
    <scope>VARIANT MET-797</scope>
    <scope>CHARACTERIZATION OF VARIANT MET-797</scope>
</reference>
<reference key="8">
    <citation type="journal article" date="2019" name="PLoS Genet.">
        <title>The demethylase NMAD-1 regulates DNA replication and repair in the Caenorhabditis elegans germline.</title>
        <authorList>
            <person name="Wang S.Y."/>
            <person name="Mao H."/>
            <person name="Shibuya H."/>
            <person name="Uzawa S."/>
            <person name="O'Brown Z.K."/>
            <person name="Wesenberg S."/>
            <person name="Shin N."/>
            <person name="Saito T.T."/>
            <person name="Gao J."/>
            <person name="Meyer B.J."/>
            <person name="Colaiacovo M.P."/>
            <person name="Greer E.L."/>
        </authorList>
    </citation>
    <scope>INTERACTION WITH NMAD-1</scope>
    <scope>SUBCELLULAR LOCATION</scope>
</reference>
<reference key="9">
    <citation type="journal article" date="2020" name="Dev. Cell">
        <title>GCNA Interacts with Spartan and Topoisomerase II to Regulate Genome Stability.</title>
        <authorList>
            <person name="Dokshin G.A."/>
            <person name="Davis G.M."/>
            <person name="Sawle A.D."/>
            <person name="Eldridge M.D."/>
            <person name="Nicholls P.K."/>
            <person name="Gourley T.E."/>
            <person name="Romer K.A."/>
            <person name="Molesworth L.W."/>
            <person name="Tatnell H.R."/>
            <person name="Ozturk A.R."/>
            <person name="de Rooij D.G."/>
            <person name="Hannon G.J."/>
            <person name="Page D.C."/>
            <person name="Mello C.C."/>
            <person name="Carmell M.A."/>
        </authorList>
    </citation>
    <scope>INTERACTION WITH GCNA-1</scope>
</reference>
<name>TOP2_CAEEL</name>
<proteinExistence type="evidence at protein level"/>
<evidence type="ECO:0000250" key="1"/>
<evidence type="ECO:0000250" key="2">
    <source>
        <dbReference type="UniProtKB" id="P06786"/>
    </source>
</evidence>
<evidence type="ECO:0000250" key="3">
    <source>
        <dbReference type="UniProtKB" id="Q02880"/>
    </source>
</evidence>
<evidence type="ECO:0000255" key="4">
    <source>
        <dbReference type="PROSITE-ProRule" id="PRU00995"/>
    </source>
</evidence>
<evidence type="ECO:0000255" key="5">
    <source>
        <dbReference type="PROSITE-ProRule" id="PRU01384"/>
    </source>
</evidence>
<evidence type="ECO:0000256" key="6">
    <source>
        <dbReference type="SAM" id="MobiDB-lite"/>
    </source>
</evidence>
<evidence type="ECO:0000269" key="7">
    <source>
    </source>
</evidence>
<evidence type="ECO:0000269" key="8">
    <source>
    </source>
</evidence>
<evidence type="ECO:0000269" key="9">
    <source>
    </source>
</evidence>
<evidence type="ECO:0000269" key="10">
    <source>
    </source>
</evidence>
<evidence type="ECO:0000269" key="11">
    <source>
    </source>
</evidence>
<evidence type="ECO:0000269" key="12">
    <source>
    </source>
</evidence>
<evidence type="ECO:0000269" key="13">
    <source>
    </source>
</evidence>
<evidence type="ECO:0000269" key="14">
    <source>
    </source>
</evidence>
<evidence type="ECO:0000303" key="15">
    <source>
    </source>
</evidence>
<evidence type="ECO:0000305" key="16"/>
<evidence type="ECO:0000305" key="17">
    <source>
    </source>
</evidence>
<evidence type="ECO:0000312" key="18">
    <source>
        <dbReference type="WormBase" id="K12D12.1"/>
    </source>
</evidence>
<dbReference type="EC" id="5.6.2.2" evidence="4"/>
<dbReference type="EMBL" id="BX284602">
    <property type="protein sequence ID" value="CAA88867.1"/>
    <property type="molecule type" value="Genomic_DNA"/>
</dbReference>
<dbReference type="EMBL" id="Z70213">
    <property type="protein sequence ID" value="CAA88867.1"/>
    <property type="status" value="JOINED"/>
    <property type="molecule type" value="Genomic_DNA"/>
</dbReference>
<dbReference type="PIR" id="T23620">
    <property type="entry name" value="T23620"/>
</dbReference>
<dbReference type="RefSeq" id="NP_496536.1">
    <property type="nucleotide sequence ID" value="NM_064135.5"/>
</dbReference>
<dbReference type="SMR" id="Q23670"/>
<dbReference type="BioGRID" id="40129">
    <property type="interactions" value="30"/>
</dbReference>
<dbReference type="DIP" id="DIP-27416N"/>
<dbReference type="FunCoup" id="Q23670">
    <property type="interactions" value="2760"/>
</dbReference>
<dbReference type="IntAct" id="Q23670">
    <property type="interactions" value="5"/>
</dbReference>
<dbReference type="MINT" id="Q23670"/>
<dbReference type="STRING" id="6239.K12D12.1.1"/>
<dbReference type="iPTMnet" id="Q23670"/>
<dbReference type="PaxDb" id="6239-K12D12.1"/>
<dbReference type="PeptideAtlas" id="Q23670"/>
<dbReference type="EnsemblMetazoa" id="K12D12.1.1">
    <property type="protein sequence ID" value="K12D12.1.1"/>
    <property type="gene ID" value="WBGene00010785"/>
</dbReference>
<dbReference type="GeneID" id="174825"/>
<dbReference type="KEGG" id="cel:CELE_K12D12.1"/>
<dbReference type="AGR" id="WB:WBGene00010785"/>
<dbReference type="CTD" id="174825"/>
<dbReference type="WormBase" id="K12D12.1">
    <property type="protein sequence ID" value="CE06184"/>
    <property type="gene ID" value="WBGene00010785"/>
    <property type="gene designation" value="top-2"/>
</dbReference>
<dbReference type="eggNOG" id="KOG0355">
    <property type="taxonomic scope" value="Eukaryota"/>
</dbReference>
<dbReference type="GeneTree" id="ENSGT00940000168342"/>
<dbReference type="HOGENOM" id="CLU_001935_1_0_1"/>
<dbReference type="InParanoid" id="Q23670"/>
<dbReference type="OMA" id="TWTQDFK"/>
<dbReference type="OrthoDB" id="276498at2759"/>
<dbReference type="PhylomeDB" id="Q23670"/>
<dbReference type="Reactome" id="R-CEL-4615885">
    <property type="pathway name" value="SUMOylation of DNA replication proteins"/>
</dbReference>
<dbReference type="SignaLink" id="Q23670"/>
<dbReference type="PRO" id="PR:Q23670"/>
<dbReference type="Proteomes" id="UP000001940">
    <property type="component" value="Chromosome II"/>
</dbReference>
<dbReference type="Bgee" id="WBGene00010785">
    <property type="expression patterns" value="Expressed in embryo and 4 other cell types or tissues"/>
</dbReference>
<dbReference type="GO" id="GO:0005694">
    <property type="term" value="C:chromosome"/>
    <property type="evidence" value="ECO:0007669"/>
    <property type="project" value="UniProtKB-SubCell"/>
</dbReference>
<dbReference type="GO" id="GO:0005737">
    <property type="term" value="C:cytoplasm"/>
    <property type="evidence" value="ECO:0007669"/>
    <property type="project" value="UniProtKB-KW"/>
</dbReference>
<dbReference type="GO" id="GO:0005654">
    <property type="term" value="C:nucleoplasm"/>
    <property type="evidence" value="ECO:0007669"/>
    <property type="project" value="UniProtKB-SubCell"/>
</dbReference>
<dbReference type="GO" id="GO:0005634">
    <property type="term" value="C:nucleus"/>
    <property type="evidence" value="ECO:0000318"/>
    <property type="project" value="GO_Central"/>
</dbReference>
<dbReference type="GO" id="GO:0005819">
    <property type="term" value="C:spindle"/>
    <property type="evidence" value="ECO:0007669"/>
    <property type="project" value="UniProtKB-SubCell"/>
</dbReference>
<dbReference type="GO" id="GO:0005524">
    <property type="term" value="F:ATP binding"/>
    <property type="evidence" value="ECO:0007669"/>
    <property type="project" value="UniProtKB-KW"/>
</dbReference>
<dbReference type="GO" id="GO:0003677">
    <property type="term" value="F:DNA binding"/>
    <property type="evidence" value="ECO:0007669"/>
    <property type="project" value="UniProtKB-KW"/>
</dbReference>
<dbReference type="GO" id="GO:0003918">
    <property type="term" value="F:DNA topoisomerase type II (double strand cut, ATP-hydrolyzing) activity"/>
    <property type="evidence" value="ECO:0007669"/>
    <property type="project" value="UniProtKB-EC"/>
</dbReference>
<dbReference type="GO" id="GO:0046872">
    <property type="term" value="F:metal ion binding"/>
    <property type="evidence" value="ECO:0007669"/>
    <property type="project" value="UniProtKB-KW"/>
</dbReference>
<dbReference type="GO" id="GO:0051301">
    <property type="term" value="P:cell division"/>
    <property type="evidence" value="ECO:0007669"/>
    <property type="project" value="UniProtKB-KW"/>
</dbReference>
<dbReference type="GO" id="GO:0006265">
    <property type="term" value="P:DNA topological change"/>
    <property type="evidence" value="ECO:0007669"/>
    <property type="project" value="InterPro"/>
</dbReference>
<dbReference type="GO" id="GO:0000070">
    <property type="term" value="P:mitotic sister chromatid segregation"/>
    <property type="evidence" value="ECO:0000316"/>
    <property type="project" value="UniProtKB"/>
</dbReference>
<dbReference type="GO" id="GO:0051306">
    <property type="term" value="P:mitotic sister chromatid separation"/>
    <property type="evidence" value="ECO:0000315"/>
    <property type="project" value="UniProtKB"/>
</dbReference>
<dbReference type="GO" id="GO:0000712">
    <property type="term" value="P:resolution of meiotic recombination intermediates"/>
    <property type="evidence" value="ECO:0000318"/>
    <property type="project" value="GO_Central"/>
</dbReference>
<dbReference type="GO" id="GO:0000819">
    <property type="term" value="P:sister chromatid segregation"/>
    <property type="evidence" value="ECO:0000318"/>
    <property type="project" value="GO_Central"/>
</dbReference>
<dbReference type="CDD" id="cd16930">
    <property type="entry name" value="HATPase_TopII-like"/>
    <property type="match status" value="1"/>
</dbReference>
<dbReference type="CDD" id="cd00187">
    <property type="entry name" value="TOP4c"/>
    <property type="match status" value="1"/>
</dbReference>
<dbReference type="CDD" id="cd03481">
    <property type="entry name" value="TopoIIA_Trans_ScTopoIIA"/>
    <property type="match status" value="1"/>
</dbReference>
<dbReference type="CDD" id="cd03365">
    <property type="entry name" value="TOPRIM_TopoIIA"/>
    <property type="match status" value="1"/>
</dbReference>
<dbReference type="FunFam" id="1.10.268.10:FF:000002">
    <property type="entry name" value="DNA topoisomerase 2"/>
    <property type="match status" value="1"/>
</dbReference>
<dbReference type="FunFam" id="3.30.1360.40:FF:000003">
    <property type="entry name" value="DNA topoisomerase 2"/>
    <property type="match status" value="1"/>
</dbReference>
<dbReference type="FunFam" id="3.30.1490.30:FF:000001">
    <property type="entry name" value="DNA topoisomerase 2"/>
    <property type="match status" value="1"/>
</dbReference>
<dbReference type="FunFam" id="3.30.230.10:FF:000008">
    <property type="entry name" value="DNA topoisomerase 2"/>
    <property type="match status" value="1"/>
</dbReference>
<dbReference type="FunFam" id="3.30.565.10:FF:000004">
    <property type="entry name" value="DNA topoisomerase 2"/>
    <property type="match status" value="1"/>
</dbReference>
<dbReference type="FunFam" id="3.40.50.670:FF:000001">
    <property type="entry name" value="DNA topoisomerase 2"/>
    <property type="match status" value="2"/>
</dbReference>
<dbReference type="FunFam" id="3.90.199.10:FF:000002">
    <property type="entry name" value="DNA topoisomerase 2"/>
    <property type="match status" value="1"/>
</dbReference>
<dbReference type="Gene3D" id="3.30.1360.40">
    <property type="match status" value="1"/>
</dbReference>
<dbReference type="Gene3D" id="3.30.1490.30">
    <property type="match status" value="1"/>
</dbReference>
<dbReference type="Gene3D" id="3.30.230.10">
    <property type="match status" value="1"/>
</dbReference>
<dbReference type="Gene3D" id="3.40.50.670">
    <property type="match status" value="1"/>
</dbReference>
<dbReference type="Gene3D" id="3.30.565.10">
    <property type="entry name" value="Histidine kinase-like ATPase, C-terminal domain"/>
    <property type="match status" value="1"/>
</dbReference>
<dbReference type="Gene3D" id="3.90.199.10">
    <property type="entry name" value="Topoisomerase II, domain 5"/>
    <property type="match status" value="1"/>
</dbReference>
<dbReference type="Gene3D" id="1.10.268.10">
    <property type="entry name" value="Topoisomerase, domain 3"/>
    <property type="match status" value="1"/>
</dbReference>
<dbReference type="InterPro" id="IPR050634">
    <property type="entry name" value="DNA_Topoisomerase_II"/>
</dbReference>
<dbReference type="InterPro" id="IPR036890">
    <property type="entry name" value="HATPase_C_sf"/>
</dbReference>
<dbReference type="InterPro" id="IPR020568">
    <property type="entry name" value="Ribosomal_Su5_D2-typ_SF"/>
</dbReference>
<dbReference type="InterPro" id="IPR014721">
    <property type="entry name" value="Ribsml_uS5_D2-typ_fold_subgr"/>
</dbReference>
<dbReference type="InterPro" id="IPR001241">
    <property type="entry name" value="Topo_IIA"/>
</dbReference>
<dbReference type="InterPro" id="IPR013760">
    <property type="entry name" value="Topo_IIA-like_dom_sf"/>
</dbReference>
<dbReference type="InterPro" id="IPR013758">
    <property type="entry name" value="Topo_IIA_A/C_ab"/>
</dbReference>
<dbReference type="InterPro" id="IPR013757">
    <property type="entry name" value="Topo_IIA_A_a_sf"/>
</dbReference>
<dbReference type="InterPro" id="IPR013759">
    <property type="entry name" value="Topo_IIA_B_C"/>
</dbReference>
<dbReference type="InterPro" id="IPR013506">
    <property type="entry name" value="Topo_IIA_bsu_dom2"/>
</dbReference>
<dbReference type="InterPro" id="IPR002205">
    <property type="entry name" value="Topo_IIA_dom_A"/>
</dbReference>
<dbReference type="InterPro" id="IPR001154">
    <property type="entry name" value="TopoII_euk"/>
</dbReference>
<dbReference type="InterPro" id="IPR018522">
    <property type="entry name" value="TopoIIA_CS"/>
</dbReference>
<dbReference type="InterPro" id="IPR031660">
    <property type="entry name" value="TOPRIM_C"/>
</dbReference>
<dbReference type="InterPro" id="IPR006171">
    <property type="entry name" value="TOPRIM_dom"/>
</dbReference>
<dbReference type="InterPro" id="IPR034157">
    <property type="entry name" value="TOPRIM_TopoII"/>
</dbReference>
<dbReference type="PANTHER" id="PTHR10169:SF62">
    <property type="entry name" value="DNA TOPOISOMERASE 2 TOP-2-RELATED"/>
    <property type="match status" value="1"/>
</dbReference>
<dbReference type="PANTHER" id="PTHR10169">
    <property type="entry name" value="DNA TOPOISOMERASE/GYRASE"/>
    <property type="match status" value="1"/>
</dbReference>
<dbReference type="Pfam" id="PF00204">
    <property type="entry name" value="DNA_gyraseB"/>
    <property type="match status" value="1"/>
</dbReference>
<dbReference type="Pfam" id="PF00521">
    <property type="entry name" value="DNA_topoisoIV"/>
    <property type="match status" value="1"/>
</dbReference>
<dbReference type="Pfam" id="PF02518">
    <property type="entry name" value="HATPase_c"/>
    <property type="match status" value="1"/>
</dbReference>
<dbReference type="Pfam" id="PF01751">
    <property type="entry name" value="Toprim"/>
    <property type="match status" value="1"/>
</dbReference>
<dbReference type="Pfam" id="PF16898">
    <property type="entry name" value="TOPRIM_C"/>
    <property type="match status" value="1"/>
</dbReference>
<dbReference type="PRINTS" id="PR01158">
    <property type="entry name" value="TOPISMRASEII"/>
</dbReference>
<dbReference type="PRINTS" id="PR00418">
    <property type="entry name" value="TPI2FAMILY"/>
</dbReference>
<dbReference type="SMART" id="SM00433">
    <property type="entry name" value="TOP2c"/>
    <property type="match status" value="1"/>
</dbReference>
<dbReference type="SMART" id="SM00434">
    <property type="entry name" value="TOP4c"/>
    <property type="match status" value="1"/>
</dbReference>
<dbReference type="SUPFAM" id="SSF55874">
    <property type="entry name" value="ATPase domain of HSP90 chaperone/DNA topoisomerase II/histidine kinase"/>
    <property type="match status" value="1"/>
</dbReference>
<dbReference type="SUPFAM" id="SSF54211">
    <property type="entry name" value="Ribosomal protein S5 domain 2-like"/>
    <property type="match status" value="1"/>
</dbReference>
<dbReference type="SUPFAM" id="SSF56719">
    <property type="entry name" value="Type II DNA topoisomerase"/>
    <property type="match status" value="1"/>
</dbReference>
<dbReference type="PROSITE" id="PS52040">
    <property type="entry name" value="TOPO_IIA"/>
    <property type="match status" value="1"/>
</dbReference>
<dbReference type="PROSITE" id="PS00177">
    <property type="entry name" value="TOPOISOMERASE_II"/>
    <property type="match status" value="1"/>
</dbReference>
<dbReference type="PROSITE" id="PS50880">
    <property type="entry name" value="TOPRIM"/>
    <property type="match status" value="1"/>
</dbReference>
<gene>
    <name evidence="15 18" type="primary">top-2</name>
    <name evidence="18" type="ORF">K12D12.1</name>
</gene>
<feature type="chain" id="PRO_0000145372" description="DNA topoisomerase 2 top-2">
    <location>
        <begin position="1"/>
        <end position="1520"/>
    </location>
</feature>
<feature type="domain" description="Toprim" evidence="4">
    <location>
        <begin position="490"/>
        <end position="607"/>
    </location>
</feature>
<feature type="domain" description="Topo IIA-type catalytic" evidence="5">
    <location>
        <begin position="750"/>
        <end position="1219"/>
    </location>
</feature>
<feature type="region of interest" description="Disordered" evidence="6">
    <location>
        <begin position="1"/>
        <end position="40"/>
    </location>
</feature>
<feature type="region of interest" description="Disordered" evidence="6">
    <location>
        <begin position="1249"/>
        <end position="1520"/>
    </location>
</feature>
<feature type="compositionally biased region" description="Acidic residues" evidence="6">
    <location>
        <begin position="1"/>
        <end position="10"/>
    </location>
</feature>
<feature type="compositionally biased region" description="Basic and acidic residues" evidence="6">
    <location>
        <begin position="12"/>
        <end position="34"/>
    </location>
</feature>
<feature type="compositionally biased region" description="Basic and acidic residues" evidence="6">
    <location>
        <begin position="1283"/>
        <end position="1320"/>
    </location>
</feature>
<feature type="compositionally biased region" description="Acidic residues" evidence="6">
    <location>
        <begin position="1342"/>
        <end position="1364"/>
    </location>
</feature>
<feature type="active site" description="O-(5'-phospho-DNA)-tyrosine intermediate" evidence="5">
    <location>
        <position position="840"/>
    </location>
</feature>
<feature type="binding site" evidence="1">
    <location>
        <position position="126"/>
    </location>
    <ligand>
        <name>ATP</name>
        <dbReference type="ChEBI" id="CHEBI:30616"/>
    </ligand>
</feature>
<feature type="binding site" evidence="1">
    <location>
        <position position="155"/>
    </location>
    <ligand>
        <name>ATP</name>
        <dbReference type="ChEBI" id="CHEBI:30616"/>
    </ligand>
</feature>
<feature type="binding site" evidence="1">
    <location>
        <begin position="183"/>
        <end position="185"/>
    </location>
    <ligand>
        <name>ATP</name>
        <dbReference type="ChEBI" id="CHEBI:30616"/>
    </ligand>
</feature>
<feature type="binding site" evidence="1">
    <location>
        <begin position="196"/>
        <end position="203"/>
    </location>
    <ligand>
        <name>ATP</name>
        <dbReference type="ChEBI" id="CHEBI:30616"/>
    </ligand>
</feature>
<feature type="binding site" evidence="1">
    <location>
        <begin position="411"/>
        <end position="413"/>
    </location>
    <ligand>
        <name>ATP</name>
        <dbReference type="ChEBI" id="CHEBI:30616"/>
    </ligand>
</feature>
<feature type="binding site" evidence="4">
    <location>
        <position position="496"/>
    </location>
    <ligand>
        <name>Mg(2+)</name>
        <dbReference type="ChEBI" id="CHEBI:18420"/>
        <label>1</label>
        <note>catalytic</note>
    </ligand>
</feature>
<feature type="binding site" evidence="4">
    <location>
        <position position="576"/>
    </location>
    <ligand>
        <name>Mg(2+)</name>
        <dbReference type="ChEBI" id="CHEBI:18420"/>
        <label>1</label>
        <note>catalytic</note>
    </ligand>
</feature>
<feature type="binding site" evidence="4">
    <location>
        <position position="576"/>
    </location>
    <ligand>
        <name>Mg(2+)</name>
        <dbReference type="ChEBI" id="CHEBI:18420"/>
        <label>2</label>
    </ligand>
</feature>
<feature type="binding site" evidence="4">
    <location>
        <position position="578"/>
    </location>
    <ligand>
        <name>Mg(2+)</name>
        <dbReference type="ChEBI" id="CHEBI:18420"/>
        <label>2</label>
    </ligand>
</feature>
<feature type="site" description="Interaction with DNA" evidence="4">
    <location>
        <position position="524"/>
    </location>
</feature>
<feature type="site" description="Interaction with DNA" evidence="4">
    <location>
        <position position="527"/>
    </location>
</feature>
<feature type="site" description="Interaction with DNA" evidence="4">
    <location>
        <position position="696"/>
    </location>
</feature>
<feature type="site" description="Interaction with DNA" evidence="4">
    <location>
        <position position="697"/>
    </location>
</feature>
<feature type="site" description="Interaction with DNA" evidence="4">
    <location>
        <position position="758"/>
    </location>
</feature>
<feature type="site" description="Interaction with DNA" evidence="4">
    <location>
        <position position="792"/>
    </location>
</feature>
<feature type="site" description="Interaction with DNA" evidence="4">
    <location>
        <position position="798"/>
    </location>
</feature>
<feature type="site" description="Transition state stabilizer" evidence="1">
    <location>
        <position position="839"/>
    </location>
</feature>
<feature type="site" description="Important for DNA bending; intercalates between base pairs of target DNA" evidence="1">
    <location>
        <position position="891"/>
    </location>
</feature>
<feature type="sequence variant" description="In strain: CB4856; increased sensitivity to etoposide, teniposide and slightly increased sensitivity to XK469 and increased resistance to dactinomycin." evidence="12">
    <original>Q</original>
    <variation>M</variation>
    <location>
        <position position="797"/>
    </location>
</feature>
<feature type="mutagenesis site" description="In av77; temperature sensitive mutant. At nonpermissive temperature, fails to localize to chromosome axes in pachytene nuclei in hermaphrodite and male germlines and is absent from nuclei in the male meiotic division zone. Leads to cell cycle arrest in male and hermaphrodite germlines." evidence="11">
    <original>R</original>
    <variation>C</variation>
    <location>
        <position position="828"/>
    </location>
</feature>
<feature type="mutagenesis site" description="In it7; temperature sensitive mutant. At nonpermissive temperature, leads to embryonic lethality due to failure in sperm chromosome segregation during anaphase I of meiosis resulting in anucleate sperm." evidence="11">
    <original>R</original>
    <variation>C</variation>
    <location>
        <position position="828"/>
    </location>
</feature>